<sequence length="241" mass="27005">MIIPSIDLIEGNIVRLYQGNYDTKTFYQNNIYDIALKYYNQGAKIVHLVDLDGALCPNNKQTSLIKNLLNYFNFHIQVGGGIRSYKDVETLLLNGAKRVVIGSSAINNITEVEKWLLEFGYKSIVLALDVYVRNNGYKEVVINGWKNRSNVSLESVLERFSTLGIKYVLCTDVKKDGTCLGPNFTLYKNISKLFKNVCFQLSGGIGTISDVISAKKSGIKDIIIGRALLENKFSLLEAIRC</sequence>
<proteinExistence type="inferred from homology"/>
<comment type="catalytic activity">
    <reaction evidence="1">
        <text>1-(5-phospho-beta-D-ribosyl)-5-[(5-phospho-beta-D-ribosylamino)methylideneamino]imidazole-4-carboxamide = 5-[(5-phospho-1-deoxy-D-ribulos-1-ylimino)methylamino]-1-(5-phospho-beta-D-ribosyl)imidazole-4-carboxamide</text>
        <dbReference type="Rhea" id="RHEA:15469"/>
        <dbReference type="ChEBI" id="CHEBI:58435"/>
        <dbReference type="ChEBI" id="CHEBI:58525"/>
        <dbReference type="EC" id="5.3.1.16"/>
    </reaction>
</comment>
<comment type="pathway">
    <text evidence="1">Amino-acid biosynthesis; L-histidine biosynthesis; L-histidine from 5-phospho-alpha-D-ribose 1-diphosphate: step 4/9.</text>
</comment>
<comment type="subcellular location">
    <subcellularLocation>
        <location evidence="1">Cytoplasm</location>
    </subcellularLocation>
</comment>
<comment type="similarity">
    <text evidence="1">Belongs to the HisA/HisF family.</text>
</comment>
<reference key="1">
    <citation type="journal article" date="2003" name="Proc. Natl. Acad. Sci. U.S.A.">
        <title>Reductive genome evolution in Buchnera aphidicola.</title>
        <authorList>
            <person name="van Ham R.C.H.J."/>
            <person name="Kamerbeek J."/>
            <person name="Palacios C."/>
            <person name="Rausell C."/>
            <person name="Abascal F."/>
            <person name="Bastolla U."/>
            <person name="Fernandez J.M."/>
            <person name="Jimenez L."/>
            <person name="Postigo M."/>
            <person name="Silva F.J."/>
            <person name="Tamames J."/>
            <person name="Viguera E."/>
            <person name="Latorre A."/>
            <person name="Valencia A."/>
            <person name="Moran F."/>
            <person name="Moya A."/>
        </authorList>
    </citation>
    <scope>NUCLEOTIDE SEQUENCE [LARGE SCALE GENOMIC DNA]</scope>
    <source>
        <strain>Bp</strain>
    </source>
</reference>
<dbReference type="EC" id="5.3.1.16" evidence="1"/>
<dbReference type="EMBL" id="AE016826">
    <property type="protein sequence ID" value="AAO26833.1"/>
    <property type="molecule type" value="Genomic_DNA"/>
</dbReference>
<dbReference type="RefSeq" id="WP_011091234.1">
    <property type="nucleotide sequence ID" value="NC_004545.1"/>
</dbReference>
<dbReference type="SMR" id="P59520"/>
<dbReference type="STRING" id="224915.bbp_098"/>
<dbReference type="KEGG" id="bab:bbp_098"/>
<dbReference type="eggNOG" id="COG0106">
    <property type="taxonomic scope" value="Bacteria"/>
</dbReference>
<dbReference type="HOGENOM" id="CLU_048577_1_2_6"/>
<dbReference type="OrthoDB" id="9807749at2"/>
<dbReference type="UniPathway" id="UPA00031">
    <property type="reaction ID" value="UER00009"/>
</dbReference>
<dbReference type="Proteomes" id="UP000000601">
    <property type="component" value="Chromosome"/>
</dbReference>
<dbReference type="GO" id="GO:0005737">
    <property type="term" value="C:cytoplasm"/>
    <property type="evidence" value="ECO:0007669"/>
    <property type="project" value="UniProtKB-SubCell"/>
</dbReference>
<dbReference type="GO" id="GO:0003949">
    <property type="term" value="F:1-(5-phosphoribosyl)-5-[(5-phosphoribosylamino)methylideneamino]imidazole-4-carboxamide isomerase activity"/>
    <property type="evidence" value="ECO:0007669"/>
    <property type="project" value="UniProtKB-UniRule"/>
</dbReference>
<dbReference type="GO" id="GO:0000105">
    <property type="term" value="P:L-histidine biosynthetic process"/>
    <property type="evidence" value="ECO:0007669"/>
    <property type="project" value="UniProtKB-UniRule"/>
</dbReference>
<dbReference type="GO" id="GO:0000162">
    <property type="term" value="P:L-tryptophan biosynthetic process"/>
    <property type="evidence" value="ECO:0007669"/>
    <property type="project" value="TreeGrafter"/>
</dbReference>
<dbReference type="CDD" id="cd04732">
    <property type="entry name" value="HisA"/>
    <property type="match status" value="1"/>
</dbReference>
<dbReference type="FunFam" id="3.20.20.70:FF:000009">
    <property type="entry name" value="1-(5-phosphoribosyl)-5-[(5-phosphoribosylamino)methylideneamino] imidazole-4-carboxamide isomerase"/>
    <property type="match status" value="1"/>
</dbReference>
<dbReference type="Gene3D" id="3.20.20.70">
    <property type="entry name" value="Aldolase class I"/>
    <property type="match status" value="1"/>
</dbReference>
<dbReference type="HAMAP" id="MF_01014">
    <property type="entry name" value="HisA"/>
    <property type="match status" value="1"/>
</dbReference>
<dbReference type="InterPro" id="IPR013785">
    <property type="entry name" value="Aldolase_TIM"/>
</dbReference>
<dbReference type="InterPro" id="IPR006062">
    <property type="entry name" value="His_biosynth"/>
</dbReference>
<dbReference type="InterPro" id="IPR006063">
    <property type="entry name" value="HisA_bact_arch"/>
</dbReference>
<dbReference type="InterPro" id="IPR044524">
    <property type="entry name" value="Isoase_HisA-like"/>
</dbReference>
<dbReference type="InterPro" id="IPR023016">
    <property type="entry name" value="Isoase_HisA-like_bact"/>
</dbReference>
<dbReference type="InterPro" id="IPR011060">
    <property type="entry name" value="RibuloseP-bd_barrel"/>
</dbReference>
<dbReference type="NCBIfam" id="TIGR00007">
    <property type="entry name" value="1-(5-phosphoribosyl)-5-[(5-phosphoribosylamino)methylideneamino]imidazole-4-carboxamide isomerase"/>
    <property type="match status" value="1"/>
</dbReference>
<dbReference type="PANTHER" id="PTHR43090">
    <property type="entry name" value="1-(5-PHOSPHORIBOSYL)-5-[(5-PHOSPHORIBOSYLAMINO)METHYLIDENEAMINO] IMIDAZOLE-4-CARBOXAMIDE ISOMERASE"/>
    <property type="match status" value="1"/>
</dbReference>
<dbReference type="PANTHER" id="PTHR43090:SF2">
    <property type="entry name" value="1-(5-PHOSPHORIBOSYL)-5-[(5-PHOSPHORIBOSYLAMINO)METHYLIDENEAMINO] IMIDAZOLE-4-CARBOXAMIDE ISOMERASE"/>
    <property type="match status" value="1"/>
</dbReference>
<dbReference type="Pfam" id="PF00977">
    <property type="entry name" value="His_biosynth"/>
    <property type="match status" value="1"/>
</dbReference>
<dbReference type="SUPFAM" id="SSF51366">
    <property type="entry name" value="Ribulose-phoshate binding barrel"/>
    <property type="match status" value="1"/>
</dbReference>
<gene>
    <name evidence="1" type="primary">hisA</name>
    <name type="ordered locus">bbp_098</name>
</gene>
<organism>
    <name type="scientific">Buchnera aphidicola subsp. Baizongia pistaciae (strain Bp)</name>
    <dbReference type="NCBI Taxonomy" id="224915"/>
    <lineage>
        <taxon>Bacteria</taxon>
        <taxon>Pseudomonadati</taxon>
        <taxon>Pseudomonadota</taxon>
        <taxon>Gammaproteobacteria</taxon>
        <taxon>Enterobacterales</taxon>
        <taxon>Erwiniaceae</taxon>
        <taxon>Buchnera</taxon>
    </lineage>
</organism>
<protein>
    <recommendedName>
        <fullName evidence="1">1-(5-phosphoribosyl)-5-[(5-phosphoribosylamino)methylideneamino] imidazole-4-carboxamide isomerase</fullName>
        <ecNumber evidence="1">5.3.1.16</ecNumber>
    </recommendedName>
    <alternativeName>
        <fullName evidence="1">Phosphoribosylformimino-5-aminoimidazole carboxamide ribotide isomerase</fullName>
    </alternativeName>
</protein>
<feature type="chain" id="PRO_0000141989" description="1-(5-phosphoribosyl)-5-[(5-phosphoribosylamino)methylideneamino] imidazole-4-carboxamide isomerase">
    <location>
        <begin position="1"/>
        <end position="241"/>
    </location>
</feature>
<feature type="active site" description="Proton acceptor" evidence="1">
    <location>
        <position position="7"/>
    </location>
</feature>
<feature type="active site" description="Proton donor" evidence="1">
    <location>
        <position position="129"/>
    </location>
</feature>
<keyword id="KW-0028">Amino-acid biosynthesis</keyword>
<keyword id="KW-0963">Cytoplasm</keyword>
<keyword id="KW-0368">Histidine biosynthesis</keyword>
<keyword id="KW-0413">Isomerase</keyword>
<keyword id="KW-1185">Reference proteome</keyword>
<evidence type="ECO:0000255" key="1">
    <source>
        <dbReference type="HAMAP-Rule" id="MF_01014"/>
    </source>
</evidence>
<accession>P59520</accession>
<name>HIS4_BUCBP</name>